<sequence>MAHQAHPFRSVLYIPGSKERALEKAQGLAADAIIFDLEDAVAHDEKIHARDLLRKTLETADYGRRIRIVRVNGMDTEWGRDDVAAFAGSKADVILIPKVSSATDVQAVADLIPDVPLWAMMETALGMLNAAEIAAHPRLTGMVMGTNDLAKELTSRFRPDRLALQTGLGLCLLAARAHGLTIVDGVYNAFKDEDGLRAECEHGRDMGFDGKTLIHPAQLEIANEVFSPSSAEIELANRQIAAFEEAERHGQGVAVVDGKIVENLHIVTARQTLAKAEAIAAFGAS</sequence>
<protein>
    <recommendedName>
        <fullName evidence="2">(3S)-malyl-CoA thioesterase</fullName>
        <ecNumber>3.1.2.30</ecNumber>
    </recommendedName>
    <alternativeName>
        <fullName evidence="2">(3S)-malyl-CoA thiolesterase</fullName>
    </alternativeName>
</protein>
<keyword id="KW-0378">Hydrolase</keyword>
<keyword id="KW-0460">Magnesium</keyword>
<keyword id="KW-0479">Metal-binding</keyword>
<accession>A4WNM9</accession>
<reference evidence="5" key="1">
    <citation type="submission" date="2007-04" db="EMBL/GenBank/DDBJ databases">
        <title>Complete sequence of chromosome of Rhodobacter sphaeroides ATCC 17025.</title>
        <authorList>
            <consortium name="US DOE Joint Genome Institute"/>
            <person name="Copeland A."/>
            <person name="Lucas S."/>
            <person name="Lapidus A."/>
            <person name="Barry K."/>
            <person name="Detter J.C."/>
            <person name="Glavina del Rio T."/>
            <person name="Hammon N."/>
            <person name="Israni S."/>
            <person name="Dalin E."/>
            <person name="Tice H."/>
            <person name="Pitluck S."/>
            <person name="Chertkov O."/>
            <person name="Brettin T."/>
            <person name="Bruce D."/>
            <person name="Han C."/>
            <person name="Schmutz J."/>
            <person name="Larimer F."/>
            <person name="Land M."/>
            <person name="Hauser L."/>
            <person name="Kyrpides N."/>
            <person name="Kim E."/>
            <person name="Richardson P."/>
            <person name="Mackenzie C."/>
            <person name="Choudhary M."/>
            <person name="Donohue T.J."/>
            <person name="Kaplan S."/>
        </authorList>
    </citation>
    <scope>NUCLEOTIDE SEQUENCE [LARGE SCALE GENOMIC DNA]</scope>
    <source>
        <strain>ATCC 17025 / ATH 2.4.3</strain>
    </source>
</reference>
<gene>
    <name evidence="2" type="primary">mcl2</name>
    <name type="ordered locus">Rsph17025_0082</name>
</gene>
<dbReference type="EC" id="3.1.2.30"/>
<dbReference type="EMBL" id="CP000661">
    <property type="protein sequence ID" value="ABP68993.1"/>
    <property type="molecule type" value="Genomic_DNA"/>
</dbReference>
<dbReference type="SMR" id="A4WNM9"/>
<dbReference type="STRING" id="349102.Rsph17025_0082"/>
<dbReference type="KEGG" id="rsq:Rsph17025_0082"/>
<dbReference type="eggNOG" id="COG2301">
    <property type="taxonomic scope" value="Bacteria"/>
</dbReference>
<dbReference type="HOGENOM" id="CLU_044864_0_1_5"/>
<dbReference type="BioCyc" id="RSPH349102:G1G8M-81-MONOMER"/>
<dbReference type="GO" id="GO:0016787">
    <property type="term" value="F:hydrolase activity"/>
    <property type="evidence" value="ECO:0007669"/>
    <property type="project" value="UniProtKB-KW"/>
</dbReference>
<dbReference type="GO" id="GO:0000287">
    <property type="term" value="F:magnesium ion binding"/>
    <property type="evidence" value="ECO:0007669"/>
    <property type="project" value="TreeGrafter"/>
</dbReference>
<dbReference type="GO" id="GO:0006107">
    <property type="term" value="P:oxaloacetate metabolic process"/>
    <property type="evidence" value="ECO:0007669"/>
    <property type="project" value="TreeGrafter"/>
</dbReference>
<dbReference type="Gene3D" id="3.20.20.60">
    <property type="entry name" value="Phosphoenolpyruvate-binding domains"/>
    <property type="match status" value="1"/>
</dbReference>
<dbReference type="InterPro" id="IPR005000">
    <property type="entry name" value="Aldolase/citrate-lyase_domain"/>
</dbReference>
<dbReference type="InterPro" id="IPR011206">
    <property type="entry name" value="Citrate_lyase_beta/mcl1/mcl2"/>
</dbReference>
<dbReference type="InterPro" id="IPR015813">
    <property type="entry name" value="Pyrv/PenolPyrv_kinase-like_dom"/>
</dbReference>
<dbReference type="InterPro" id="IPR040442">
    <property type="entry name" value="Pyrv_kinase-like_dom_sf"/>
</dbReference>
<dbReference type="PANTHER" id="PTHR32308:SF10">
    <property type="entry name" value="CITRATE LYASE SUBUNIT BETA"/>
    <property type="match status" value="1"/>
</dbReference>
<dbReference type="PANTHER" id="PTHR32308">
    <property type="entry name" value="LYASE BETA SUBUNIT, PUTATIVE (AFU_ORTHOLOGUE AFUA_4G13030)-RELATED"/>
    <property type="match status" value="1"/>
</dbReference>
<dbReference type="Pfam" id="PF03328">
    <property type="entry name" value="HpcH_HpaI"/>
    <property type="match status" value="1"/>
</dbReference>
<dbReference type="PIRSF" id="PIRSF015582">
    <property type="entry name" value="Cit_lyase_B"/>
    <property type="match status" value="1"/>
</dbReference>
<dbReference type="SUPFAM" id="SSF51621">
    <property type="entry name" value="Phosphoenolpyruvate/pyruvate domain"/>
    <property type="match status" value="1"/>
</dbReference>
<organism>
    <name type="scientific">Cereibacter sphaeroides (strain ATCC 17025 / ATH 2.4.3)</name>
    <name type="common">Rhodobacter sphaeroides</name>
    <dbReference type="NCBI Taxonomy" id="349102"/>
    <lineage>
        <taxon>Bacteria</taxon>
        <taxon>Pseudomonadati</taxon>
        <taxon>Pseudomonadota</taxon>
        <taxon>Alphaproteobacteria</taxon>
        <taxon>Rhodobacterales</taxon>
        <taxon>Paracoccaceae</taxon>
        <taxon>Cereibacter</taxon>
    </lineage>
</organism>
<evidence type="ECO:0000250" key="1"/>
<evidence type="ECO:0000250" key="2">
    <source>
        <dbReference type="UniProtKB" id="D3JV05"/>
    </source>
</evidence>
<evidence type="ECO:0000250" key="3">
    <source>
        <dbReference type="UniProtKB" id="Q9RUZ0"/>
    </source>
</evidence>
<evidence type="ECO:0000305" key="4"/>
<evidence type="ECO:0000312" key="5">
    <source>
        <dbReference type="EMBL" id="ABP68993.1"/>
    </source>
</evidence>
<comment type="function">
    <text evidence="1">Catalyzes the hydrolysis of (3S)-malyl-CoA to (3S)-malate and free CoA. Inactive towards beta-methylmalyl-CoA and other CoA esters (By similarity).</text>
</comment>
<comment type="catalytic activity">
    <reaction>
        <text>(S)-malyl-CoA + H2O = (S)-malate + CoA + H(+)</text>
        <dbReference type="Rhea" id="RHEA:38291"/>
        <dbReference type="ChEBI" id="CHEBI:15377"/>
        <dbReference type="ChEBI" id="CHEBI:15378"/>
        <dbReference type="ChEBI" id="CHEBI:15589"/>
        <dbReference type="ChEBI" id="CHEBI:57287"/>
        <dbReference type="ChEBI" id="CHEBI:57317"/>
        <dbReference type="EC" id="3.1.2.30"/>
    </reaction>
</comment>
<comment type="cofactor">
    <cofactor evidence="2">
        <name>Mg(2+)</name>
        <dbReference type="ChEBI" id="CHEBI:18420"/>
    </cofactor>
</comment>
<comment type="subunit">
    <text evidence="2">Homodimer or homotrimer.</text>
</comment>
<comment type="similarity">
    <text evidence="4">Belongs to the HpcH/HpaI aldolase family.</text>
</comment>
<proteinExistence type="inferred from homology"/>
<name>MCTE_CERS5</name>
<feature type="chain" id="PRO_0000405021" description="(3S)-malyl-CoA thioesterase">
    <location>
        <begin position="1"/>
        <end position="285"/>
    </location>
</feature>
<feature type="binding site" evidence="3">
    <location>
        <position position="70"/>
    </location>
    <ligand>
        <name>substrate</name>
    </ligand>
</feature>
<feature type="binding site" evidence="3">
    <location>
        <position position="122"/>
    </location>
    <ligand>
        <name>Mg(2+)</name>
        <dbReference type="ChEBI" id="CHEBI:18420"/>
    </ligand>
</feature>
<feature type="binding site" evidence="3">
    <location>
        <position position="122"/>
    </location>
    <ligand>
        <name>substrate</name>
    </ligand>
</feature>
<feature type="binding site" evidence="3">
    <location>
        <position position="148"/>
    </location>
    <ligand>
        <name>Mg(2+)</name>
        <dbReference type="ChEBI" id="CHEBI:18420"/>
    </ligand>
</feature>